<comment type="function">
    <text>Receptor that may play a role in the perception of bitterness and is gustducin-linked. May play a role in sensing the chemical composition of the gastrointestinal content. The activity of this receptor may stimulate alpha gustducin, mediate PLC-beta-2 activation and lead to the gating of TRPM5.</text>
</comment>
<comment type="subcellular location">
    <subcellularLocation>
        <location>Membrane</location>
        <topology>Multi-pass membrane protein</topology>
    </subcellularLocation>
</comment>
<comment type="tissue specificity">
    <text evidence="2">Expressed in subsets of taste receptor cells of the tongue and palate epithelium and exclusively in gustducin-positive cells. Expressed in 15% taste bud cells in circumvallate and foliate papillae but only in 2% in fungiform papillae. Expressed in the duodenum, antrum and fundus (part of the stomach).</text>
</comment>
<comment type="miscellaneous">
    <text>Most taste cells may be activated by a limited number of bitter compounds; individual taste cells can discriminate among bitter stimuli.</text>
</comment>
<comment type="similarity">
    <text evidence="3">Belongs to the G-protein coupled receptor T2R family.</text>
</comment>
<comment type="caution">
    <text evidence="3">This protein was previously referred to as T2R26 or T2R12 but is now considered to be the ortholog of human TAS2R41.</text>
</comment>
<keyword id="KW-0297">G-protein coupled receptor</keyword>
<keyword id="KW-0325">Glycoprotein</keyword>
<keyword id="KW-0472">Membrane</keyword>
<keyword id="KW-0675">Receptor</keyword>
<keyword id="KW-1185">Reference proteome</keyword>
<keyword id="KW-0716">Sensory transduction</keyword>
<keyword id="KW-0919">Taste</keyword>
<keyword id="KW-0807">Transducer</keyword>
<keyword id="KW-0812">Transmembrane</keyword>
<keyword id="KW-1133">Transmembrane helix</keyword>
<evidence type="ECO:0000255" key="1"/>
<evidence type="ECO:0000269" key="2">
    <source>
    </source>
</evidence>
<evidence type="ECO:0000305" key="3"/>
<evidence type="ECO:0000312" key="4">
    <source>
        <dbReference type="RGD" id="727853"/>
    </source>
</evidence>
<feature type="chain" id="PRO_0000082301" description="Taste receptor type 2 member 41">
    <location>
        <begin position="1"/>
        <end position="308"/>
    </location>
</feature>
<feature type="topological domain" description="Extracellular" evidence="1">
    <location>
        <begin position="1"/>
        <end position="6"/>
    </location>
</feature>
<feature type="transmembrane region" description="Helical; Name=1" evidence="1">
    <location>
        <begin position="7"/>
        <end position="27"/>
    </location>
</feature>
<feature type="topological domain" description="Cytoplasmic" evidence="1">
    <location>
        <begin position="28"/>
        <end position="60"/>
    </location>
</feature>
<feature type="transmembrane region" description="Helical; Name=2" evidence="1">
    <location>
        <begin position="61"/>
        <end position="81"/>
    </location>
</feature>
<feature type="topological domain" description="Extracellular" evidence="1">
    <location>
        <begin position="82"/>
        <end position="90"/>
    </location>
</feature>
<feature type="transmembrane region" description="Helical; Name=3" evidence="1">
    <location>
        <begin position="91"/>
        <end position="111"/>
    </location>
</feature>
<feature type="topological domain" description="Cytoplasmic" evidence="1">
    <location>
        <begin position="112"/>
        <end position="128"/>
    </location>
</feature>
<feature type="transmembrane region" description="Helical; Name=4" evidence="1">
    <location>
        <begin position="129"/>
        <end position="149"/>
    </location>
</feature>
<feature type="topological domain" description="Extracellular" evidence="1">
    <location>
        <begin position="150"/>
        <end position="184"/>
    </location>
</feature>
<feature type="transmembrane region" description="Helical; Name=5" evidence="1">
    <location>
        <begin position="185"/>
        <end position="205"/>
    </location>
</feature>
<feature type="topological domain" description="Cytoplasmic" evidence="1">
    <location>
        <begin position="206"/>
        <end position="239"/>
    </location>
</feature>
<feature type="transmembrane region" description="Helical; Name=6" evidence="1">
    <location>
        <begin position="240"/>
        <end position="260"/>
    </location>
</feature>
<feature type="topological domain" description="Extracellular" evidence="1">
    <location>
        <begin position="261"/>
        <end position="264"/>
    </location>
</feature>
<feature type="transmembrane region" description="Helical; Name=7" evidence="1">
    <location>
        <begin position="265"/>
        <end position="285"/>
    </location>
</feature>
<feature type="topological domain" description="Cytoplasmic" evidence="1">
    <location>
        <begin position="286"/>
        <end position="308"/>
    </location>
</feature>
<feature type="glycosylation site" description="N-linked (GlcNAc...) asparagine" evidence="1">
    <location>
        <position position="152"/>
    </location>
</feature>
<feature type="glycosylation site" description="N-linked (GlcNAc...) asparagine" evidence="1">
    <location>
        <position position="167"/>
    </location>
</feature>
<sequence>MLSTVSVFFMSIFVLLCFLGILANGFIVLMLSREWLWRGRLLPSDMILLSLGTSRFCQQCVGLVNSFYYSLHLVEYSRSLARQLISLHMDFLNSATFWFGTWLSVLFCIKIANFSHPAFLWLKWRFPALVPWLLLGSILVSFIVTLMFFWGNHTVYQAFLRRKFSGNTTFKEWNRRLEIDYFMPLKLVTTSIPCSLFLVSILLLINSLRRHSQRMQHNAHSLQDPNTQAHSRALKSLISFLVLYALSYVSMVIDATVVISSDNVWYWPWQIILYLCMSVHPFILITNNLKFRGTFRQLLLLARGFWVT</sequence>
<name>T2R41_RAT</name>
<protein>
    <recommendedName>
        <fullName>Taste receptor type 2 member 41</fullName>
        <shortName>T2R41</shortName>
    </recommendedName>
    <alternativeName>
        <fullName>T2R12</fullName>
    </alternativeName>
    <alternativeName>
        <fullName evidence="4">Taste receptor type 2 member 126</fullName>
    </alternativeName>
</protein>
<proteinExistence type="evidence at protein level"/>
<dbReference type="EMBL" id="AF240768">
    <property type="protein sequence ID" value="AAF45306.1"/>
    <property type="molecule type" value="mRNA"/>
</dbReference>
<dbReference type="RefSeq" id="NP_647551.1">
    <property type="nucleotide sequence ID" value="NM_139335.1"/>
</dbReference>
<dbReference type="SMR" id="Q9JKE7"/>
<dbReference type="FunCoup" id="Q9JKE7">
    <property type="interactions" value="85"/>
</dbReference>
<dbReference type="STRING" id="10116.ENSRNOP00000024048"/>
<dbReference type="GlyCosmos" id="Q9JKE7">
    <property type="glycosylation" value="2 sites, No reported glycans"/>
</dbReference>
<dbReference type="GlyGen" id="Q9JKE7">
    <property type="glycosylation" value="2 sites"/>
</dbReference>
<dbReference type="PhosphoSitePlus" id="Q9JKE7"/>
<dbReference type="PaxDb" id="10116-ENSRNOP00000024048"/>
<dbReference type="Ensembl" id="ENSRNOT00000024048.3">
    <property type="protein sequence ID" value="ENSRNOP00000024048.1"/>
    <property type="gene ID" value="ENSRNOG00000017881.3"/>
</dbReference>
<dbReference type="GeneID" id="246219"/>
<dbReference type="KEGG" id="rno:246219"/>
<dbReference type="UCSC" id="RGD:727853">
    <property type="organism name" value="rat"/>
</dbReference>
<dbReference type="AGR" id="RGD:727853"/>
<dbReference type="CTD" id="387353"/>
<dbReference type="RGD" id="727853">
    <property type="gene designation" value="Tas2r126"/>
</dbReference>
<dbReference type="eggNOG" id="ENOG502S2SI">
    <property type="taxonomic scope" value="Eukaryota"/>
</dbReference>
<dbReference type="GeneTree" id="ENSGT01100000263477"/>
<dbReference type="HOGENOM" id="CLU_072337_1_1_1"/>
<dbReference type="InParanoid" id="Q9JKE7"/>
<dbReference type="OMA" id="FCLQWVG"/>
<dbReference type="OrthoDB" id="9896661at2759"/>
<dbReference type="PhylomeDB" id="Q9JKE7"/>
<dbReference type="TreeFam" id="TF335891"/>
<dbReference type="Reactome" id="R-RNO-418594">
    <property type="pathway name" value="G alpha (i) signalling events"/>
</dbReference>
<dbReference type="Reactome" id="R-RNO-420499">
    <property type="pathway name" value="Class C/3 (Metabotropic glutamate/pheromone receptors)"/>
</dbReference>
<dbReference type="Reactome" id="R-RNO-9717207">
    <property type="pathway name" value="Sensory perception of sweet, bitter, and umami (glutamate) taste"/>
</dbReference>
<dbReference type="PRO" id="PR:Q9JKE7"/>
<dbReference type="Proteomes" id="UP000002494">
    <property type="component" value="Chromosome 4"/>
</dbReference>
<dbReference type="GO" id="GO:0016020">
    <property type="term" value="C:membrane"/>
    <property type="evidence" value="ECO:0000266"/>
    <property type="project" value="RGD"/>
</dbReference>
<dbReference type="GO" id="GO:0004930">
    <property type="term" value="F:G protein-coupled receptor activity"/>
    <property type="evidence" value="ECO:0007669"/>
    <property type="project" value="UniProtKB-KW"/>
</dbReference>
<dbReference type="GO" id="GO:0008527">
    <property type="term" value="F:taste receptor activity"/>
    <property type="evidence" value="ECO:0000304"/>
    <property type="project" value="UniProtKB"/>
</dbReference>
<dbReference type="CDD" id="cd15018">
    <property type="entry name" value="7tm_TAS2R41-like"/>
    <property type="match status" value="1"/>
</dbReference>
<dbReference type="FunFam" id="1.20.1070.10:FF:000055">
    <property type="entry name" value="Taste receptor type 2"/>
    <property type="match status" value="1"/>
</dbReference>
<dbReference type="Gene3D" id="1.20.1070.10">
    <property type="entry name" value="Rhodopsin 7-helix transmembrane proteins"/>
    <property type="match status" value="1"/>
</dbReference>
<dbReference type="InterPro" id="IPR007960">
    <property type="entry name" value="TAS2R"/>
</dbReference>
<dbReference type="PANTHER" id="PTHR11394">
    <property type="entry name" value="TASTE RECEPTOR TYPE 2"/>
    <property type="match status" value="1"/>
</dbReference>
<dbReference type="PANTHER" id="PTHR11394:SF73">
    <property type="entry name" value="TASTE RECEPTOR TYPE 2 MEMBER 41"/>
    <property type="match status" value="1"/>
</dbReference>
<dbReference type="Pfam" id="PF05296">
    <property type="entry name" value="TAS2R"/>
    <property type="match status" value="1"/>
</dbReference>
<dbReference type="SUPFAM" id="SSF81321">
    <property type="entry name" value="Family A G protein-coupled receptor-like"/>
    <property type="match status" value="1"/>
</dbReference>
<gene>
    <name type="primary">Tas2r41</name>
    <name type="synonym">Tas2r12</name>
    <name evidence="4" type="synonym">Tas2r126</name>
</gene>
<accession>Q9JKE7</accession>
<organism>
    <name type="scientific">Rattus norvegicus</name>
    <name type="common">Rat</name>
    <dbReference type="NCBI Taxonomy" id="10116"/>
    <lineage>
        <taxon>Eukaryota</taxon>
        <taxon>Metazoa</taxon>
        <taxon>Chordata</taxon>
        <taxon>Craniata</taxon>
        <taxon>Vertebrata</taxon>
        <taxon>Euteleostomi</taxon>
        <taxon>Mammalia</taxon>
        <taxon>Eutheria</taxon>
        <taxon>Euarchontoglires</taxon>
        <taxon>Glires</taxon>
        <taxon>Rodentia</taxon>
        <taxon>Myomorpha</taxon>
        <taxon>Muroidea</taxon>
        <taxon>Muridae</taxon>
        <taxon>Murinae</taxon>
        <taxon>Rattus</taxon>
    </lineage>
</organism>
<reference key="1">
    <citation type="journal article" date="2000" name="Cell">
        <title>A novel family of mammalian taste receptors.</title>
        <authorList>
            <person name="Adler E."/>
            <person name="Hoon M.A."/>
            <person name="Mueller K.L."/>
            <person name="Chandrashekar J."/>
            <person name="Ryba N.J.P."/>
            <person name="Zuker C.S."/>
        </authorList>
    </citation>
    <scope>NUCLEOTIDE SEQUENCE [MRNA]</scope>
    <scope>TOPOLOGY</scope>
</reference>
<reference key="2">
    <citation type="journal article" date="2000" name="Cell">
        <title>T2Rs function as bitter taste receptors.</title>
        <authorList>
            <person name="Chandrashekar J."/>
            <person name="Mueller K.L."/>
            <person name="Hoon M.A."/>
            <person name="Adler E."/>
            <person name="Feng L."/>
            <person name="Guo W."/>
            <person name="Zuker C.S."/>
            <person name="Ryba N.J.P."/>
        </authorList>
    </citation>
    <scope>CHARACTERIZATION</scope>
</reference>
<reference key="3">
    <citation type="journal article" date="2002" name="Proc. Natl. Acad. Sci. U.S.A.">
        <title>Expression of bitter taste receptors of the T2R family in the gastrointestinal tract and enteroendocrine STC-1 cells.</title>
        <authorList>
            <person name="Wu S.V."/>
            <person name="Rozengurt N."/>
            <person name="Yang M."/>
            <person name="Young S.H."/>
            <person name="Sinnett-Smith J."/>
            <person name="Rozengurt E."/>
        </authorList>
    </citation>
    <scope>TISSUE SPECIFICITY</scope>
</reference>
<reference key="4">
    <citation type="journal article" date="2002" name="Curr. Opin. Neurobiol.">
        <title>Receptors for bitter and sweet taste.</title>
        <authorList>
            <person name="Montmayeur J.-P."/>
            <person name="Matsunami H."/>
        </authorList>
    </citation>
    <scope>REVIEW</scope>
</reference>
<reference key="5">
    <citation type="journal article" date="2002" name="J. Biol. Chem.">
        <title>Molecular mechanisms of bitter and sweet taste transduction.</title>
        <authorList>
            <person name="Margolskee R.F."/>
        </authorList>
    </citation>
    <scope>REVIEW</scope>
</reference>
<reference key="6">
    <citation type="journal article" date="2003" name="Cell">
        <title>Coding of sweet, bitter, and umami tastes: different receptor cells sharing similar signaling pathways.</title>
        <authorList>
            <person name="Zhang Y."/>
            <person name="Hoon M.A."/>
            <person name="Chandrashekar J."/>
            <person name="Mueller K.L."/>
            <person name="Cook B."/>
            <person name="Wu D."/>
            <person name="Zuker C.S."/>
            <person name="Ryba N.J."/>
        </authorList>
    </citation>
    <scope>REVIEW</scope>
</reference>